<accession>Q9BUL5</accession>
<accession>A1DZ74</accession>
<accession>B3KVH8</accession>
<accession>B4DLK6</accession>
<accession>D3DTN4</accession>
<accession>Q8IZK0</accession>
<accession>Q96HG7</accession>
<accession>Q9H5X0</accession>
<reference key="1">
    <citation type="journal article" date="2007" name="Leukemia">
        <title>A novel NUP98-PHF23 fusion resulting from a cryptic translocation t(11;17)(p15;p13) in acute myeloid leukemia.</title>
        <authorList>
            <person name="Reader J.C."/>
            <person name="Meekins J.S."/>
            <person name="Gojo I."/>
            <person name="Ning Y."/>
        </authorList>
    </citation>
    <scope>NUCLEOTIDE SEQUENCE [MRNA] (ISOFORM 1)</scope>
    <scope>CHROMOSOMAL REARRANGEMENT</scope>
    <source>
        <tissue>Peripheral blood</tissue>
    </source>
</reference>
<reference key="2">
    <citation type="submission" date="2002-04" db="EMBL/GenBank/DDBJ databases">
        <title>Identification of JUNE-1, a novel gene encoding a PHD-containing protein.</title>
        <authorList>
            <person name="Yuan Z.Q."/>
            <person name="McCann T."/>
            <person name="Lappin T.R.J."/>
        </authorList>
    </citation>
    <scope>NUCLEOTIDE SEQUENCE [MRNA] (ISOFORM 2)</scope>
</reference>
<reference key="3">
    <citation type="journal article" date="2004" name="Nat. Genet.">
        <title>Complete sequencing and characterization of 21,243 full-length human cDNAs.</title>
        <authorList>
            <person name="Ota T."/>
            <person name="Suzuki Y."/>
            <person name="Nishikawa T."/>
            <person name="Otsuki T."/>
            <person name="Sugiyama T."/>
            <person name="Irie R."/>
            <person name="Wakamatsu A."/>
            <person name="Hayashi K."/>
            <person name="Sato H."/>
            <person name="Nagai K."/>
            <person name="Kimura K."/>
            <person name="Makita H."/>
            <person name="Sekine M."/>
            <person name="Obayashi M."/>
            <person name="Nishi T."/>
            <person name="Shibahara T."/>
            <person name="Tanaka T."/>
            <person name="Ishii S."/>
            <person name="Yamamoto J."/>
            <person name="Saito K."/>
            <person name="Kawai Y."/>
            <person name="Isono Y."/>
            <person name="Nakamura Y."/>
            <person name="Nagahari K."/>
            <person name="Murakami K."/>
            <person name="Yasuda T."/>
            <person name="Iwayanagi T."/>
            <person name="Wagatsuma M."/>
            <person name="Shiratori A."/>
            <person name="Sudo H."/>
            <person name="Hosoiri T."/>
            <person name="Kaku Y."/>
            <person name="Kodaira H."/>
            <person name="Kondo H."/>
            <person name="Sugawara M."/>
            <person name="Takahashi M."/>
            <person name="Kanda K."/>
            <person name="Yokoi T."/>
            <person name="Furuya T."/>
            <person name="Kikkawa E."/>
            <person name="Omura Y."/>
            <person name="Abe K."/>
            <person name="Kamihara K."/>
            <person name="Katsuta N."/>
            <person name="Sato K."/>
            <person name="Tanikawa M."/>
            <person name="Yamazaki M."/>
            <person name="Ninomiya K."/>
            <person name="Ishibashi T."/>
            <person name="Yamashita H."/>
            <person name="Murakawa K."/>
            <person name="Fujimori K."/>
            <person name="Tanai H."/>
            <person name="Kimata M."/>
            <person name="Watanabe M."/>
            <person name="Hiraoka S."/>
            <person name="Chiba Y."/>
            <person name="Ishida S."/>
            <person name="Ono Y."/>
            <person name="Takiguchi S."/>
            <person name="Watanabe S."/>
            <person name="Yosida M."/>
            <person name="Hotuta T."/>
            <person name="Kusano J."/>
            <person name="Kanehori K."/>
            <person name="Takahashi-Fujii A."/>
            <person name="Hara H."/>
            <person name="Tanase T.-O."/>
            <person name="Nomura Y."/>
            <person name="Togiya S."/>
            <person name="Komai F."/>
            <person name="Hara R."/>
            <person name="Takeuchi K."/>
            <person name="Arita M."/>
            <person name="Imose N."/>
            <person name="Musashino K."/>
            <person name="Yuuki H."/>
            <person name="Oshima A."/>
            <person name="Sasaki N."/>
            <person name="Aotsuka S."/>
            <person name="Yoshikawa Y."/>
            <person name="Matsunawa H."/>
            <person name="Ichihara T."/>
            <person name="Shiohata N."/>
            <person name="Sano S."/>
            <person name="Moriya S."/>
            <person name="Momiyama H."/>
            <person name="Satoh N."/>
            <person name="Takami S."/>
            <person name="Terashima Y."/>
            <person name="Suzuki O."/>
            <person name="Nakagawa S."/>
            <person name="Senoh A."/>
            <person name="Mizoguchi H."/>
            <person name="Goto Y."/>
            <person name="Shimizu F."/>
            <person name="Wakebe H."/>
            <person name="Hishigaki H."/>
            <person name="Watanabe T."/>
            <person name="Sugiyama A."/>
            <person name="Takemoto M."/>
            <person name="Kawakami B."/>
            <person name="Yamazaki M."/>
            <person name="Watanabe K."/>
            <person name="Kumagai A."/>
            <person name="Itakura S."/>
            <person name="Fukuzumi Y."/>
            <person name="Fujimori Y."/>
            <person name="Komiyama M."/>
            <person name="Tashiro H."/>
            <person name="Tanigami A."/>
            <person name="Fujiwara T."/>
            <person name="Ono T."/>
            <person name="Yamada K."/>
            <person name="Fujii Y."/>
            <person name="Ozaki K."/>
            <person name="Hirao M."/>
            <person name="Ohmori Y."/>
            <person name="Kawabata A."/>
            <person name="Hikiji T."/>
            <person name="Kobatake N."/>
            <person name="Inagaki H."/>
            <person name="Ikema Y."/>
            <person name="Okamoto S."/>
            <person name="Okitani R."/>
            <person name="Kawakami T."/>
            <person name="Noguchi S."/>
            <person name="Itoh T."/>
            <person name="Shigeta K."/>
            <person name="Senba T."/>
            <person name="Matsumura K."/>
            <person name="Nakajima Y."/>
            <person name="Mizuno T."/>
            <person name="Morinaga M."/>
            <person name="Sasaki M."/>
            <person name="Togashi T."/>
            <person name="Oyama M."/>
            <person name="Hata H."/>
            <person name="Watanabe M."/>
            <person name="Komatsu T."/>
            <person name="Mizushima-Sugano J."/>
            <person name="Satoh T."/>
            <person name="Shirai Y."/>
            <person name="Takahashi Y."/>
            <person name="Nakagawa K."/>
            <person name="Okumura K."/>
            <person name="Nagase T."/>
            <person name="Nomura N."/>
            <person name="Kikuchi H."/>
            <person name="Masuho Y."/>
            <person name="Yamashita R."/>
            <person name="Nakai K."/>
            <person name="Yada T."/>
            <person name="Nakamura Y."/>
            <person name="Ohara O."/>
            <person name="Isogai T."/>
            <person name="Sugano S."/>
        </authorList>
    </citation>
    <scope>NUCLEOTIDE SEQUENCE [LARGE SCALE MRNA] (ISOFORMS 1; 3 AND 4)</scope>
    <source>
        <tissue>Esophagus</tissue>
        <tissue>Signet-ring cell carcinoma</tissue>
        <tissue>Teratocarcinoma</tissue>
        <tissue>Umbilical cord blood</tissue>
    </source>
</reference>
<reference key="4">
    <citation type="journal article" date="2006" name="Nature">
        <title>DNA sequence of human chromosome 17 and analysis of rearrangement in the human lineage.</title>
        <authorList>
            <person name="Zody M.C."/>
            <person name="Garber M."/>
            <person name="Adams D.J."/>
            <person name="Sharpe T."/>
            <person name="Harrow J."/>
            <person name="Lupski J.R."/>
            <person name="Nicholson C."/>
            <person name="Searle S.M."/>
            <person name="Wilming L."/>
            <person name="Young S.K."/>
            <person name="Abouelleil A."/>
            <person name="Allen N.R."/>
            <person name="Bi W."/>
            <person name="Bloom T."/>
            <person name="Borowsky M.L."/>
            <person name="Bugalter B.E."/>
            <person name="Butler J."/>
            <person name="Chang J.L."/>
            <person name="Chen C.-K."/>
            <person name="Cook A."/>
            <person name="Corum B."/>
            <person name="Cuomo C.A."/>
            <person name="de Jong P.J."/>
            <person name="DeCaprio D."/>
            <person name="Dewar K."/>
            <person name="FitzGerald M."/>
            <person name="Gilbert J."/>
            <person name="Gibson R."/>
            <person name="Gnerre S."/>
            <person name="Goldstein S."/>
            <person name="Grafham D.V."/>
            <person name="Grocock R."/>
            <person name="Hafez N."/>
            <person name="Hagopian D.S."/>
            <person name="Hart E."/>
            <person name="Norman C.H."/>
            <person name="Humphray S."/>
            <person name="Jaffe D.B."/>
            <person name="Jones M."/>
            <person name="Kamal M."/>
            <person name="Khodiyar V.K."/>
            <person name="LaButti K."/>
            <person name="Laird G."/>
            <person name="Lehoczky J."/>
            <person name="Liu X."/>
            <person name="Lokyitsang T."/>
            <person name="Loveland J."/>
            <person name="Lui A."/>
            <person name="Macdonald P."/>
            <person name="Major J.E."/>
            <person name="Matthews L."/>
            <person name="Mauceli E."/>
            <person name="McCarroll S.A."/>
            <person name="Mihalev A.H."/>
            <person name="Mudge J."/>
            <person name="Nguyen C."/>
            <person name="Nicol R."/>
            <person name="O'Leary S.B."/>
            <person name="Osoegawa K."/>
            <person name="Schwartz D.C."/>
            <person name="Shaw-Smith C."/>
            <person name="Stankiewicz P."/>
            <person name="Steward C."/>
            <person name="Swarbreck D."/>
            <person name="Venkataraman V."/>
            <person name="Whittaker C.A."/>
            <person name="Yang X."/>
            <person name="Zimmer A.R."/>
            <person name="Bradley A."/>
            <person name="Hubbard T."/>
            <person name="Birren B.W."/>
            <person name="Rogers J."/>
            <person name="Lander E.S."/>
            <person name="Nusbaum C."/>
        </authorList>
    </citation>
    <scope>NUCLEOTIDE SEQUENCE [LARGE SCALE GENOMIC DNA]</scope>
</reference>
<reference key="5">
    <citation type="submission" date="2005-09" db="EMBL/GenBank/DDBJ databases">
        <authorList>
            <person name="Mural R.J."/>
            <person name="Istrail S."/>
            <person name="Sutton G.G."/>
            <person name="Florea L."/>
            <person name="Halpern A.L."/>
            <person name="Mobarry C.M."/>
            <person name="Lippert R."/>
            <person name="Walenz B."/>
            <person name="Shatkay H."/>
            <person name="Dew I."/>
            <person name="Miller J.R."/>
            <person name="Flanigan M.J."/>
            <person name="Edwards N.J."/>
            <person name="Bolanos R."/>
            <person name="Fasulo D."/>
            <person name="Halldorsson B.V."/>
            <person name="Hannenhalli S."/>
            <person name="Turner R."/>
            <person name="Yooseph S."/>
            <person name="Lu F."/>
            <person name="Nusskern D.R."/>
            <person name="Shue B.C."/>
            <person name="Zheng X.H."/>
            <person name="Zhong F."/>
            <person name="Delcher A.L."/>
            <person name="Huson D.H."/>
            <person name="Kravitz S.A."/>
            <person name="Mouchard L."/>
            <person name="Reinert K."/>
            <person name="Remington K.A."/>
            <person name="Clark A.G."/>
            <person name="Waterman M.S."/>
            <person name="Eichler E.E."/>
            <person name="Adams M.D."/>
            <person name="Hunkapiller M.W."/>
            <person name="Myers E.W."/>
            <person name="Venter J.C."/>
        </authorList>
    </citation>
    <scope>NUCLEOTIDE SEQUENCE [LARGE SCALE GENOMIC DNA]</scope>
</reference>
<reference key="6">
    <citation type="journal article" date="2004" name="Genome Res.">
        <title>The status, quality, and expansion of the NIH full-length cDNA project: the Mammalian Gene Collection (MGC).</title>
        <authorList>
            <consortium name="The MGC Project Team"/>
        </authorList>
    </citation>
    <scope>NUCLEOTIDE SEQUENCE [LARGE SCALE MRNA] (ISOFORM 1)</scope>
    <source>
        <tissue>Brain</tissue>
        <tissue>Colon</tissue>
    </source>
</reference>
<reference key="7">
    <citation type="journal article" date="2008" name="Proc. Natl. Acad. Sci. U.S.A.">
        <title>A quantitative atlas of mitotic phosphorylation.</title>
        <authorList>
            <person name="Dephoure N."/>
            <person name="Zhou C."/>
            <person name="Villen J."/>
            <person name="Beausoleil S.A."/>
            <person name="Bakalarski C.E."/>
            <person name="Elledge S.J."/>
            <person name="Gygi S.P."/>
        </authorList>
    </citation>
    <scope>PHOSPHORYLATION [LARGE SCALE ANALYSIS] AT SER-147; SER-150; THR-165; SER-315; SER-316 AND SER-317</scope>
    <scope>IDENTIFICATION BY MASS SPECTROMETRY [LARGE SCALE ANALYSIS]</scope>
    <source>
        <tissue>Cervix carcinoma</tissue>
    </source>
</reference>
<reference key="8">
    <citation type="journal article" date="2009" name="Sci. Signal.">
        <title>Quantitative phosphoproteomic analysis of T cell receptor signaling reveals system-wide modulation of protein-protein interactions.</title>
        <authorList>
            <person name="Mayya V."/>
            <person name="Lundgren D.H."/>
            <person name="Hwang S.-I."/>
            <person name="Rezaul K."/>
            <person name="Wu L."/>
            <person name="Eng J.K."/>
            <person name="Rodionov V."/>
            <person name="Han D.K."/>
        </authorList>
    </citation>
    <scope>PHOSPHORYLATION [LARGE SCALE ANALYSIS] AT SER-315</scope>
    <scope>IDENTIFICATION BY MASS SPECTROMETRY [LARGE SCALE ANALYSIS]</scope>
    <source>
        <tissue>Leukemic T-cell</tissue>
    </source>
</reference>
<reference key="9">
    <citation type="journal article" date="2011" name="BMC Syst. Biol.">
        <title>Initial characterization of the human central proteome.</title>
        <authorList>
            <person name="Burkard T.R."/>
            <person name="Planyavsky M."/>
            <person name="Kaupe I."/>
            <person name="Breitwieser F.P."/>
            <person name="Buerckstuemmer T."/>
            <person name="Bennett K.L."/>
            <person name="Superti-Furga G."/>
            <person name="Colinge J."/>
        </authorList>
    </citation>
    <scope>IDENTIFICATION BY MASS SPECTROMETRY [LARGE SCALE ANALYSIS]</scope>
</reference>
<reference key="10">
    <citation type="journal article" date="2012" name="Proc. Natl. Acad. Sci. U.S.A.">
        <title>N-terminal acetylome analyses and functional insights of the N-terminal acetyltransferase NatB.</title>
        <authorList>
            <person name="Van Damme P."/>
            <person name="Lasa M."/>
            <person name="Polevoda B."/>
            <person name="Gazquez C."/>
            <person name="Elosegui-Artola A."/>
            <person name="Kim D.S."/>
            <person name="De Juan-Pardo E."/>
            <person name="Demeyer K."/>
            <person name="Hole K."/>
            <person name="Larrea E."/>
            <person name="Timmerman E."/>
            <person name="Prieto J."/>
            <person name="Arnesen T."/>
            <person name="Sherman F."/>
            <person name="Gevaert K."/>
            <person name="Aldabe R."/>
        </authorList>
    </citation>
    <scope>ACETYLATION [LARGE SCALE ANALYSIS] AT MET-1</scope>
    <scope>IDENTIFICATION BY MASS SPECTROMETRY [LARGE SCALE ANALYSIS]</scope>
</reference>
<reference key="11">
    <citation type="journal article" date="2013" name="J. Proteome Res.">
        <title>Toward a comprehensive characterization of a human cancer cell phosphoproteome.</title>
        <authorList>
            <person name="Zhou H."/>
            <person name="Di Palma S."/>
            <person name="Preisinger C."/>
            <person name="Peng M."/>
            <person name="Polat A.N."/>
            <person name="Heck A.J."/>
            <person name="Mohammed S."/>
        </authorList>
    </citation>
    <scope>PHOSPHORYLATION [LARGE SCALE ANALYSIS] AT SER-124 AND SER-400</scope>
    <scope>IDENTIFICATION BY MASS SPECTROMETRY [LARGE SCALE ANALYSIS]</scope>
    <source>
        <tissue>Cervix carcinoma</tissue>
        <tissue>Erythroleukemia</tissue>
    </source>
</reference>
<reference key="12">
    <citation type="journal article" date="2014" name="Autophagy">
        <title>PHF23 (plant homeodomain finger protein 23) negatively regulates cell autophagy by promoting ubiquitination and degradation of E3 ligase LRSAM1.</title>
        <authorList>
            <person name="Wang Z."/>
            <person name="Hu J."/>
            <person name="Li G."/>
            <person name="Qu L."/>
            <person name="He Q."/>
            <person name="Lou Y."/>
            <person name="Song Q."/>
            <person name="Ma D."/>
            <person name="Chen Y."/>
        </authorList>
    </citation>
    <scope>TISSUE SPECIFICITY</scope>
    <scope>SUBCELLULAR LOCATION</scope>
    <scope>INTERACTION WITH LRSAM1</scope>
    <scope>DOMAIN</scope>
    <scope>FUNCTION</scope>
</reference>
<reference key="13">
    <citation type="journal article" date="2014" name="J. Proteomics">
        <title>An enzyme assisted RP-RPLC approach for in-depth analysis of human liver phosphoproteome.</title>
        <authorList>
            <person name="Bian Y."/>
            <person name="Song C."/>
            <person name="Cheng K."/>
            <person name="Dong M."/>
            <person name="Wang F."/>
            <person name="Huang J."/>
            <person name="Sun D."/>
            <person name="Wang L."/>
            <person name="Ye M."/>
            <person name="Zou H."/>
        </authorList>
    </citation>
    <scope>IDENTIFICATION BY MASS SPECTROMETRY [LARGE SCALE ANALYSIS]</scope>
    <source>
        <tissue>Liver</tissue>
    </source>
</reference>
<comment type="function">
    <text evidence="3">Acts as a negative regulator of autophagy, through promoting ubiquitination and degradation of LRSAM1, an E3 ubiquitin ligase that promotes autophagy in response to starvation or infecting bacteria.</text>
</comment>
<comment type="subunit">
    <text evidence="3">Interacts with LRSAM1.</text>
</comment>
<comment type="interaction">
    <interactant intactId="EBI-722852">
        <id>Q9BUL5</id>
    </interactant>
    <interactant intactId="EBI-718729">
        <id>P55212</id>
        <label>CASP6</label>
    </interactant>
    <organismsDiffer>false</organismsDiffer>
    <experiments>3</experiments>
</comment>
<comment type="interaction">
    <interactant intactId="EBI-722852">
        <id>Q9BUL5</id>
    </interactant>
    <interactant intactId="EBI-446479">
        <id>P99999</id>
        <label>CYCS</label>
    </interactant>
    <organismsDiffer>false</organismsDiffer>
    <experiments>3</experiments>
</comment>
<comment type="interaction">
    <interactant intactId="EBI-722852">
        <id>Q9BUL5</id>
    </interactant>
    <interactant intactId="EBI-348399">
        <id>P22607</id>
        <label>FGFR3</label>
    </interactant>
    <organismsDiffer>false</organismsDiffer>
    <experiments>3</experiments>
</comment>
<comment type="interaction">
    <interactant intactId="EBI-722852">
        <id>Q9BUL5</id>
    </interactant>
    <interactant intactId="EBI-351506">
        <id>P06396</id>
        <label>GSN</label>
    </interactant>
    <organismsDiffer>false</organismsDiffer>
    <experiments>3</experiments>
</comment>
<comment type="interaction">
    <interactant intactId="EBI-722852">
        <id>Q9BUL5</id>
    </interactant>
    <interactant intactId="EBI-350145">
        <id>P01112</id>
        <label>HRAS</label>
    </interactant>
    <organismsDiffer>false</organismsDiffer>
    <experiments>3</experiments>
</comment>
<comment type="interaction">
    <interactant intactId="EBI-722852">
        <id>Q9BUL5</id>
    </interactant>
    <interactant intactId="EBI-948266">
        <id>O14901</id>
        <label>KLF11</label>
    </interactant>
    <organismsDiffer>false</organismsDiffer>
    <experiments>3</experiments>
</comment>
<comment type="interaction">
    <interactant intactId="EBI-722852">
        <id>Q9BUL5</id>
    </interactant>
    <interactant intactId="EBI-21591415">
        <id>P13473-2</id>
        <label>LAMP2</label>
    </interactant>
    <organismsDiffer>false</organismsDiffer>
    <experiments>3</experiments>
</comment>
<comment type="interaction">
    <interactant intactId="EBI-722852">
        <id>Q9BUL5</id>
    </interactant>
    <interactant intactId="EBI-286642">
        <id>P62826</id>
        <label>RAN</label>
    </interactant>
    <organismsDiffer>false</organismsDiffer>
    <experiments>3</experiments>
</comment>
<comment type="subcellular location">
    <subcellularLocation>
        <location evidence="3">Nucleus</location>
    </subcellularLocation>
    <subcellularLocation>
        <location evidence="3">Cytoplasm</location>
    </subcellularLocation>
    <text evidence="3">Mainly present in the nucleus and part in the cytoplasm.</text>
</comment>
<comment type="alternative products">
    <event type="alternative splicing"/>
    <isoform>
        <id>Q9BUL5-1</id>
        <name>1</name>
        <sequence type="displayed"/>
    </isoform>
    <isoform>
        <id>Q9BUL5-2</id>
        <name>2</name>
        <name>JUNE1B</name>
        <sequence type="described" ref="VSP_027962 VSP_027963"/>
    </isoform>
    <isoform>
        <id>Q9BUL5-3</id>
        <name>3</name>
        <sequence type="described" ref="VSP_056058"/>
    </isoform>
    <isoform>
        <id>Q9BUL5-4</id>
        <name>4</name>
        <sequence type="described" ref="VSP_057218"/>
    </isoform>
</comment>
<comment type="tissue specificity">
    <text evidence="3">Widely expressed in human tissues and various cell lines.</text>
</comment>
<comment type="domain">
    <text evidence="3">The PHD-type zinc-finger domain is required for interaction with LRSAM1 and negative regulation of autophagy.</text>
</comment>
<comment type="disease">
    <text>A chromosomal aberration involving PHF23 is found in a patient with acute myeloid leukemia (AML). Translocation t(11;17)(p15;p13) with NUP98.</text>
</comment>
<comment type="similarity">
    <text evidence="7">Belongs to the PHF23 family.</text>
</comment>
<comment type="sequence caution" evidence="7">
    <conflict type="erroneous initiation">
        <sequence resource="EMBL-CDS" id="ABK59096"/>
    </conflict>
</comment>
<comment type="sequence caution" evidence="7">
    <conflict type="frameshift">
        <sequence resource="EMBL-CDS" id="BAB15498"/>
    </conflict>
</comment>
<keyword id="KW-0002">3D-structure</keyword>
<keyword id="KW-0007">Acetylation</keyword>
<keyword id="KW-0025">Alternative splicing</keyword>
<keyword id="KW-0072">Autophagy</keyword>
<keyword id="KW-0160">Chromosomal rearrangement</keyword>
<keyword id="KW-0963">Cytoplasm</keyword>
<keyword id="KW-0479">Metal-binding</keyword>
<keyword id="KW-0539">Nucleus</keyword>
<keyword id="KW-0597">Phosphoprotein</keyword>
<keyword id="KW-1267">Proteomics identification</keyword>
<keyword id="KW-1185">Reference proteome</keyword>
<keyword id="KW-0833">Ubl conjugation pathway</keyword>
<keyword id="KW-0862">Zinc</keyword>
<keyword id="KW-0863">Zinc-finger</keyword>
<proteinExistence type="evidence at protein level"/>
<gene>
    <name evidence="5" type="primary">PHF23</name>
</gene>
<protein>
    <recommendedName>
        <fullName evidence="5">PHD finger protein 23</fullName>
    </recommendedName>
    <alternativeName>
        <fullName evidence="1">PDH-containing protein JUNE-1</fullName>
    </alternativeName>
</protein>
<name>PHF23_HUMAN</name>
<dbReference type="EMBL" id="EF071958">
    <property type="protein sequence ID" value="ABK59096.1"/>
    <property type="status" value="ALT_INIT"/>
    <property type="molecule type" value="mRNA"/>
</dbReference>
<dbReference type="EMBL" id="EF071959">
    <property type="protein sequence ID" value="ABK59097.1"/>
    <property type="molecule type" value="mRNA"/>
</dbReference>
<dbReference type="EMBL" id="AY099328">
    <property type="protein sequence ID" value="AAM44129.1"/>
    <property type="molecule type" value="mRNA"/>
</dbReference>
<dbReference type="EMBL" id="AK026537">
    <property type="protein sequence ID" value="BAB15498.1"/>
    <property type="status" value="ALT_FRAME"/>
    <property type="molecule type" value="mRNA"/>
</dbReference>
<dbReference type="EMBL" id="AK074766">
    <property type="protein sequence ID" value="BAC11192.1"/>
    <property type="molecule type" value="mRNA"/>
</dbReference>
<dbReference type="EMBL" id="AK122901">
    <property type="protein sequence ID" value="BAG53790.1"/>
    <property type="molecule type" value="mRNA"/>
</dbReference>
<dbReference type="EMBL" id="AK297040">
    <property type="protein sequence ID" value="BAG59568.1"/>
    <property type="molecule type" value="mRNA"/>
</dbReference>
<dbReference type="EMBL" id="AC120057">
    <property type="status" value="NOT_ANNOTATED_CDS"/>
    <property type="molecule type" value="Genomic_DNA"/>
</dbReference>
<dbReference type="EMBL" id="CH471108">
    <property type="protein sequence ID" value="EAW90241.1"/>
    <property type="molecule type" value="Genomic_DNA"/>
</dbReference>
<dbReference type="EMBL" id="CH471108">
    <property type="protein sequence ID" value="EAW90242.1"/>
    <property type="molecule type" value="Genomic_DNA"/>
</dbReference>
<dbReference type="EMBL" id="CH471108">
    <property type="protein sequence ID" value="EAW90243.1"/>
    <property type="molecule type" value="Genomic_DNA"/>
</dbReference>
<dbReference type="EMBL" id="BC002509">
    <property type="protein sequence ID" value="AAH02509.1"/>
    <property type="molecule type" value="mRNA"/>
</dbReference>
<dbReference type="EMBL" id="BC008630">
    <property type="protein sequence ID" value="AAH08630.1"/>
    <property type="molecule type" value="mRNA"/>
</dbReference>
<dbReference type="CCDS" id="CCDS42250.1">
    <molecule id="Q9BUL5-1"/>
</dbReference>
<dbReference type="CCDS" id="CCDS67143.1">
    <molecule id="Q9BUL5-4"/>
</dbReference>
<dbReference type="CCDS" id="CCDS67144.1">
    <molecule id="Q9BUL5-3"/>
</dbReference>
<dbReference type="RefSeq" id="NP_001271446.1">
    <molecule id="Q9BUL5-3"/>
    <property type="nucleotide sequence ID" value="NM_001284517.2"/>
</dbReference>
<dbReference type="RefSeq" id="NP_001271447.1">
    <molecule id="Q9BUL5-4"/>
    <property type="nucleotide sequence ID" value="NM_001284518.2"/>
</dbReference>
<dbReference type="RefSeq" id="NP_077273.2">
    <molecule id="Q9BUL5-1"/>
    <property type="nucleotide sequence ID" value="NM_024297.3"/>
</dbReference>
<dbReference type="PDB" id="6WXK">
    <property type="method" value="X-ray"/>
    <property type="resolution" value="2.90 A"/>
    <property type="chains" value="A/B/C/D/E=338-393"/>
</dbReference>
<dbReference type="PDBsum" id="6WXK"/>
<dbReference type="SMR" id="Q9BUL5"/>
<dbReference type="BioGRID" id="122561">
    <property type="interactions" value="42"/>
</dbReference>
<dbReference type="FunCoup" id="Q9BUL5">
    <property type="interactions" value="2760"/>
</dbReference>
<dbReference type="IntAct" id="Q9BUL5">
    <property type="interactions" value="28"/>
</dbReference>
<dbReference type="MINT" id="Q9BUL5"/>
<dbReference type="STRING" id="9606.ENSP00000322579"/>
<dbReference type="BindingDB" id="Q9BUL5"/>
<dbReference type="ChEMBL" id="CHEMBL2424508"/>
<dbReference type="GlyGen" id="Q9BUL5">
    <property type="glycosylation" value="4 sites, 1 O-linked glycan (1 site)"/>
</dbReference>
<dbReference type="iPTMnet" id="Q9BUL5"/>
<dbReference type="PhosphoSitePlus" id="Q9BUL5"/>
<dbReference type="BioMuta" id="PHF23"/>
<dbReference type="DMDM" id="74733231"/>
<dbReference type="jPOST" id="Q9BUL5"/>
<dbReference type="MassIVE" id="Q9BUL5"/>
<dbReference type="PaxDb" id="9606-ENSP00000322579"/>
<dbReference type="PeptideAtlas" id="Q9BUL5"/>
<dbReference type="ProteomicsDB" id="3757"/>
<dbReference type="ProteomicsDB" id="4541"/>
<dbReference type="ProteomicsDB" id="79106">
    <molecule id="Q9BUL5-1"/>
</dbReference>
<dbReference type="ProteomicsDB" id="79107">
    <molecule id="Q9BUL5-2"/>
</dbReference>
<dbReference type="Pumba" id="Q9BUL5"/>
<dbReference type="Antibodypedia" id="23960">
    <property type="antibodies" value="57 antibodies from 13 providers"/>
</dbReference>
<dbReference type="DNASU" id="79142"/>
<dbReference type="Ensembl" id="ENST00000320316.8">
    <molecule id="Q9BUL5-1"/>
    <property type="protein sequence ID" value="ENSP00000322579.3"/>
    <property type="gene ID" value="ENSG00000040633.13"/>
</dbReference>
<dbReference type="Ensembl" id="ENST00000454255.6">
    <molecule id="Q9BUL5-4"/>
    <property type="protein sequence ID" value="ENSP00000414607.2"/>
    <property type="gene ID" value="ENSG00000040633.13"/>
</dbReference>
<dbReference type="Ensembl" id="ENST00000571362.5">
    <molecule id="Q9BUL5-3"/>
    <property type="protein sequence ID" value="ENSP00000460738.1"/>
    <property type="gene ID" value="ENSG00000040633.13"/>
</dbReference>
<dbReference type="GeneID" id="79142"/>
<dbReference type="KEGG" id="hsa:79142"/>
<dbReference type="MANE-Select" id="ENST00000320316.8">
    <property type="protein sequence ID" value="ENSP00000322579.3"/>
    <property type="RefSeq nucleotide sequence ID" value="NM_024297.3"/>
    <property type="RefSeq protein sequence ID" value="NP_077273.2"/>
</dbReference>
<dbReference type="UCSC" id="uc002gfa.3">
    <molecule id="Q9BUL5-1"/>
    <property type="organism name" value="human"/>
</dbReference>
<dbReference type="AGR" id="HGNC:28428"/>
<dbReference type="CTD" id="79142"/>
<dbReference type="DisGeNET" id="79142"/>
<dbReference type="GeneCards" id="PHF23"/>
<dbReference type="HGNC" id="HGNC:28428">
    <property type="gene designation" value="PHF23"/>
</dbReference>
<dbReference type="HPA" id="ENSG00000040633">
    <property type="expression patterns" value="Low tissue specificity"/>
</dbReference>
<dbReference type="MIM" id="612910">
    <property type="type" value="gene"/>
</dbReference>
<dbReference type="neXtProt" id="NX_Q9BUL5"/>
<dbReference type="OpenTargets" id="ENSG00000040633"/>
<dbReference type="PharmGKB" id="PA142671175"/>
<dbReference type="VEuPathDB" id="HostDB:ENSG00000040633"/>
<dbReference type="eggNOG" id="KOG1844">
    <property type="taxonomic scope" value="Eukaryota"/>
</dbReference>
<dbReference type="GeneTree" id="ENSGT00530000063882"/>
<dbReference type="HOGENOM" id="CLU_047981_1_0_1"/>
<dbReference type="InParanoid" id="Q9BUL5"/>
<dbReference type="OMA" id="CRDMRRS"/>
<dbReference type="OrthoDB" id="79252at2759"/>
<dbReference type="PAN-GO" id="Q9BUL5">
    <property type="GO annotations" value="4 GO annotations based on evolutionary models"/>
</dbReference>
<dbReference type="PhylomeDB" id="Q9BUL5"/>
<dbReference type="TreeFam" id="TF331373"/>
<dbReference type="PathwayCommons" id="Q9BUL5"/>
<dbReference type="SignaLink" id="Q9BUL5"/>
<dbReference type="BioGRID-ORCS" id="79142">
    <property type="hits" value="93 hits in 1166 CRISPR screens"/>
</dbReference>
<dbReference type="ChiTaRS" id="PHF23">
    <property type="organism name" value="human"/>
</dbReference>
<dbReference type="GenomeRNAi" id="79142"/>
<dbReference type="Pharos" id="Q9BUL5">
    <property type="development level" value="Tbio"/>
</dbReference>
<dbReference type="PRO" id="PR:Q9BUL5"/>
<dbReference type="Proteomes" id="UP000005640">
    <property type="component" value="Chromosome 17"/>
</dbReference>
<dbReference type="RNAct" id="Q9BUL5">
    <property type="molecule type" value="protein"/>
</dbReference>
<dbReference type="Bgee" id="ENSG00000040633">
    <property type="expression patterns" value="Expressed in granulocyte and 179 other cell types or tissues"/>
</dbReference>
<dbReference type="ExpressionAtlas" id="Q9BUL5">
    <property type="expression patterns" value="baseline and differential"/>
</dbReference>
<dbReference type="GO" id="GO:0005829">
    <property type="term" value="C:cytosol"/>
    <property type="evidence" value="ECO:0000314"/>
    <property type="project" value="HPA"/>
</dbReference>
<dbReference type="GO" id="GO:0005654">
    <property type="term" value="C:nucleoplasm"/>
    <property type="evidence" value="ECO:0000314"/>
    <property type="project" value="HPA"/>
</dbReference>
<dbReference type="GO" id="GO:0005634">
    <property type="term" value="C:nucleus"/>
    <property type="evidence" value="ECO:0000318"/>
    <property type="project" value="GO_Central"/>
</dbReference>
<dbReference type="GO" id="GO:0008270">
    <property type="term" value="F:zinc ion binding"/>
    <property type="evidence" value="ECO:0007669"/>
    <property type="project" value="UniProtKB-KW"/>
</dbReference>
<dbReference type="GO" id="GO:0006914">
    <property type="term" value="P:autophagy"/>
    <property type="evidence" value="ECO:0007669"/>
    <property type="project" value="UniProtKB-KW"/>
</dbReference>
<dbReference type="GO" id="GO:1902902">
    <property type="term" value="P:negative regulation of autophagosome assembly"/>
    <property type="evidence" value="ECO:0000315"/>
    <property type="project" value="GO_Central"/>
</dbReference>
<dbReference type="GO" id="GO:1901097">
    <property type="term" value="P:negative regulation of autophagosome maturation"/>
    <property type="evidence" value="ECO:0000315"/>
    <property type="project" value="GO_Central"/>
</dbReference>
<dbReference type="GO" id="GO:0031398">
    <property type="term" value="P:positive regulation of protein ubiquitination"/>
    <property type="evidence" value="ECO:0000315"/>
    <property type="project" value="GO_Central"/>
</dbReference>
<dbReference type="CDD" id="cd15631">
    <property type="entry name" value="PHD_PHF23"/>
    <property type="match status" value="1"/>
</dbReference>
<dbReference type="Gene3D" id="3.30.40.10">
    <property type="entry name" value="Zinc/RING finger domain, C3HC4 (zinc finger)"/>
    <property type="match status" value="1"/>
</dbReference>
<dbReference type="InterPro" id="IPR011011">
    <property type="entry name" value="Znf_FYVE_PHD"/>
</dbReference>
<dbReference type="InterPro" id="IPR001965">
    <property type="entry name" value="Znf_PHD"/>
</dbReference>
<dbReference type="InterPro" id="IPR019787">
    <property type="entry name" value="Znf_PHD-finger"/>
</dbReference>
<dbReference type="InterPro" id="IPR013083">
    <property type="entry name" value="Znf_RING/FYVE/PHD"/>
</dbReference>
<dbReference type="PANTHER" id="PTHR14571">
    <property type="entry name" value="HISTONE-LYSINE N-METHYLTRANSFERASE SET-26-RELATED"/>
    <property type="match status" value="1"/>
</dbReference>
<dbReference type="PANTHER" id="PTHR14571:SF8">
    <property type="entry name" value="PHD FINGER PROTEIN 23"/>
    <property type="match status" value="1"/>
</dbReference>
<dbReference type="Pfam" id="PF13831">
    <property type="entry name" value="PHD_2"/>
    <property type="match status" value="1"/>
</dbReference>
<dbReference type="SMART" id="SM00249">
    <property type="entry name" value="PHD"/>
    <property type="match status" value="1"/>
</dbReference>
<dbReference type="SUPFAM" id="SSF57903">
    <property type="entry name" value="FYVE/PHD zinc finger"/>
    <property type="match status" value="1"/>
</dbReference>
<sequence length="403" mass="43818">MLEAMAEPSPEDPPPTLKPETQPPEKRRRTIEDFNKFCSFVLAYAGYIPPSKEESDWPASGSSSPLRGESAADSDGWDSAPSDLRTIQTFVKKAKSSKRRAAQAGPTQPGPPRSTFSRLQAPDSATLLEKMKLKDSLFDLDGPKVASPLSPTSLTHTSRPPAALTPVPLSQGDLSHPPRKKDRKNRKLGPGAGAGFGVLRRPRPTPGDGEKRSRIKKSKKRKLKKAERGDRLPPPGPPQAPPSDTDSEEEEEEEEEEEEEEMATVVGGEAPVPVLPTPPEAPRPPATVHPEGVPPADSESKEVGSTETSQDGDASSSEGEMRVMDEDIMVESGDDSWDLITCYCRKPFAGRPMIECSLCGTWIHLSCAKIKKTNVPDFFYCQKCKELRPEARRLGGPPKSGEP</sequence>
<organism>
    <name type="scientific">Homo sapiens</name>
    <name type="common">Human</name>
    <dbReference type="NCBI Taxonomy" id="9606"/>
    <lineage>
        <taxon>Eukaryota</taxon>
        <taxon>Metazoa</taxon>
        <taxon>Chordata</taxon>
        <taxon>Craniata</taxon>
        <taxon>Vertebrata</taxon>
        <taxon>Euteleostomi</taxon>
        <taxon>Mammalia</taxon>
        <taxon>Eutheria</taxon>
        <taxon>Euarchontoglires</taxon>
        <taxon>Primates</taxon>
        <taxon>Haplorrhini</taxon>
        <taxon>Catarrhini</taxon>
        <taxon>Hominidae</taxon>
        <taxon>Homo</taxon>
    </lineage>
</organism>
<feature type="chain" id="PRO_0000302830" description="PHD finger protein 23">
    <location>
        <begin position="1"/>
        <end position="403"/>
    </location>
</feature>
<feature type="zinc finger region" description="PHD-type">
    <location>
        <begin position="339"/>
        <end position="387"/>
    </location>
</feature>
<feature type="region of interest" description="Disordered" evidence="2">
    <location>
        <begin position="1"/>
        <end position="30"/>
    </location>
</feature>
<feature type="region of interest" description="Disordered" evidence="2">
    <location>
        <begin position="50"/>
        <end position="123"/>
    </location>
</feature>
<feature type="region of interest" description="Disordered" evidence="2">
    <location>
        <begin position="139"/>
        <end position="321"/>
    </location>
</feature>
<feature type="compositionally biased region" description="Basic residues" evidence="2">
    <location>
        <begin position="92"/>
        <end position="101"/>
    </location>
</feature>
<feature type="compositionally biased region" description="Low complexity" evidence="2">
    <location>
        <begin position="147"/>
        <end position="161"/>
    </location>
</feature>
<feature type="compositionally biased region" description="Basic residues" evidence="2">
    <location>
        <begin position="177"/>
        <end position="187"/>
    </location>
</feature>
<feature type="compositionally biased region" description="Basic residues" evidence="2">
    <location>
        <begin position="213"/>
        <end position="225"/>
    </location>
</feature>
<feature type="compositionally biased region" description="Pro residues" evidence="2">
    <location>
        <begin position="232"/>
        <end position="241"/>
    </location>
</feature>
<feature type="compositionally biased region" description="Acidic residues" evidence="2">
    <location>
        <begin position="245"/>
        <end position="262"/>
    </location>
</feature>
<feature type="compositionally biased region" description="Pro residues" evidence="2">
    <location>
        <begin position="273"/>
        <end position="287"/>
    </location>
</feature>
<feature type="compositionally biased region" description="Polar residues" evidence="2">
    <location>
        <begin position="305"/>
        <end position="318"/>
    </location>
</feature>
<feature type="site" description="Breakpoint for translocation to form NUP98-PHF23 oncogene">
    <location>
        <begin position="120"/>
        <end position="121"/>
    </location>
</feature>
<feature type="modified residue" description="N-acetylmethionine" evidence="10">
    <location>
        <position position="1"/>
    </location>
</feature>
<feature type="modified residue" description="Phosphoserine" evidence="11">
    <location>
        <position position="124"/>
    </location>
</feature>
<feature type="modified residue" description="Phosphoserine" evidence="8">
    <location>
        <position position="147"/>
    </location>
</feature>
<feature type="modified residue" description="Phosphoserine" evidence="8">
    <location>
        <position position="150"/>
    </location>
</feature>
<feature type="modified residue" description="Phosphothreonine" evidence="8">
    <location>
        <position position="165"/>
    </location>
</feature>
<feature type="modified residue" description="Phosphoserine" evidence="8 9">
    <location>
        <position position="315"/>
    </location>
</feature>
<feature type="modified residue" description="Phosphoserine" evidence="8">
    <location>
        <position position="316"/>
    </location>
</feature>
<feature type="modified residue" description="Phosphoserine" evidence="8">
    <location>
        <position position="317"/>
    </location>
</feature>
<feature type="modified residue" description="Phosphoserine" evidence="11">
    <location>
        <position position="400"/>
    </location>
</feature>
<feature type="splice variant" id="VSP_057218" description="In isoform 4." evidence="4">
    <original>MLEAMAEPSPE</original>
    <variation>MPGDCRR</variation>
    <location>
        <begin position="1"/>
        <end position="11"/>
    </location>
</feature>
<feature type="splice variant" id="VSP_056058" description="In isoform 3." evidence="4">
    <location>
        <begin position="54"/>
        <end position="120"/>
    </location>
</feature>
<feature type="splice variant" id="VSP_027962" description="In isoform 2." evidence="6">
    <original>SPTSLTHTS</original>
    <variation>SRPCAANTP</variation>
    <location>
        <begin position="150"/>
        <end position="158"/>
    </location>
</feature>
<feature type="splice variant" id="VSP_027963" description="In isoform 2." evidence="6">
    <location>
        <begin position="159"/>
        <end position="403"/>
    </location>
</feature>
<feature type="sequence conflict" description="In Ref. 3; BAB15498." evidence="7" ref="3">
    <original>E</original>
    <variation>D</variation>
    <location>
        <position position="390"/>
    </location>
</feature>
<feature type="strand" evidence="12">
    <location>
        <begin position="353"/>
        <end position="355"/>
    </location>
</feature>
<feature type="turn" evidence="12">
    <location>
        <begin position="357"/>
        <end position="359"/>
    </location>
</feature>
<feature type="strand" evidence="12">
    <location>
        <begin position="362"/>
        <end position="364"/>
    </location>
</feature>
<feature type="turn" evidence="12">
    <location>
        <begin position="365"/>
        <end position="369"/>
    </location>
</feature>
<feature type="turn" evidence="12">
    <location>
        <begin position="382"/>
        <end position="384"/>
    </location>
</feature>
<evidence type="ECO:0000250" key="1">
    <source>
        <dbReference type="UniProtKB" id="Q8BSN5"/>
    </source>
</evidence>
<evidence type="ECO:0000256" key="2">
    <source>
        <dbReference type="SAM" id="MobiDB-lite"/>
    </source>
</evidence>
<evidence type="ECO:0000269" key="3">
    <source>
    </source>
</evidence>
<evidence type="ECO:0000303" key="4">
    <source>
    </source>
</evidence>
<evidence type="ECO:0000303" key="5">
    <source>
    </source>
</evidence>
<evidence type="ECO:0000303" key="6">
    <source ref="2"/>
</evidence>
<evidence type="ECO:0000305" key="7"/>
<evidence type="ECO:0007744" key="8">
    <source>
    </source>
</evidence>
<evidence type="ECO:0007744" key="9">
    <source>
    </source>
</evidence>
<evidence type="ECO:0007744" key="10">
    <source>
    </source>
</evidence>
<evidence type="ECO:0007744" key="11">
    <source>
    </source>
</evidence>
<evidence type="ECO:0007829" key="12">
    <source>
        <dbReference type="PDB" id="6WXK"/>
    </source>
</evidence>